<evidence type="ECO:0000250" key="1"/>
<evidence type="ECO:0000250" key="2">
    <source>
        <dbReference type="UniProtKB" id="Q9NRD1"/>
    </source>
</evidence>
<evidence type="ECO:0000255" key="3">
    <source>
        <dbReference type="PROSITE-ProRule" id="PRU00080"/>
    </source>
</evidence>
<evidence type="ECO:0000255" key="4">
    <source>
        <dbReference type="PROSITE-ProRule" id="PRU00482"/>
    </source>
</evidence>
<evidence type="ECO:0007829" key="5">
    <source>
        <dbReference type="PDB" id="8ZUH"/>
    </source>
</evidence>
<dbReference type="EMBL" id="BT030507">
    <property type="protein sequence ID" value="ABQ12947.1"/>
    <property type="molecule type" value="mRNA"/>
</dbReference>
<dbReference type="EMBL" id="BC104546">
    <property type="protein sequence ID" value="AAI04547.1"/>
    <property type="molecule type" value="mRNA"/>
</dbReference>
<dbReference type="RefSeq" id="NP_001029605.1">
    <property type="nucleotide sequence ID" value="NM_001034433.1"/>
</dbReference>
<dbReference type="RefSeq" id="XP_005217017.1">
    <property type="nucleotide sequence ID" value="XM_005216960.5"/>
</dbReference>
<dbReference type="RefSeq" id="XP_005217020.1">
    <property type="nucleotide sequence ID" value="XM_005216963.5"/>
</dbReference>
<dbReference type="RefSeq" id="XP_005217021.1">
    <property type="nucleotide sequence ID" value="XM_005216964.2"/>
</dbReference>
<dbReference type="RefSeq" id="XP_010811560.1">
    <property type="nucleotide sequence ID" value="XM_010813258.4"/>
</dbReference>
<dbReference type="RefSeq" id="XP_015330583.1">
    <property type="nucleotide sequence ID" value="XM_015475097.3"/>
</dbReference>
<dbReference type="RefSeq" id="XP_059731344.1">
    <property type="nucleotide sequence ID" value="XM_059875361.1"/>
</dbReference>
<dbReference type="PDB" id="8ZUH">
    <property type="method" value="X-ray"/>
    <property type="resolution" value="3.20 A"/>
    <property type="chains" value="A/C=1-265"/>
</dbReference>
<dbReference type="PDBsum" id="8ZUH"/>
<dbReference type="SMR" id="Q3SX24"/>
<dbReference type="FunCoup" id="Q3SX24">
    <property type="interactions" value="735"/>
</dbReference>
<dbReference type="STRING" id="9913.ENSBTAP00000069202"/>
<dbReference type="PaxDb" id="9913-ENSBTAP00000034071"/>
<dbReference type="Ensembl" id="ENSBTAT00000034170.6">
    <property type="protein sequence ID" value="ENSBTAP00000034071.4"/>
    <property type="gene ID" value="ENSBTAG00000014777.7"/>
</dbReference>
<dbReference type="GeneID" id="513023"/>
<dbReference type="KEGG" id="bta:513023"/>
<dbReference type="CTD" id="26270"/>
<dbReference type="VEuPathDB" id="HostDB:ENSBTAG00000014777"/>
<dbReference type="VGNC" id="VGNC:28918">
    <property type="gene designation" value="FBXO6"/>
</dbReference>
<dbReference type="eggNOG" id="ENOG502RZA6">
    <property type="taxonomic scope" value="Eukaryota"/>
</dbReference>
<dbReference type="GeneTree" id="ENSGT00940000159980"/>
<dbReference type="HOGENOM" id="CLU_068548_0_0_1"/>
<dbReference type="InParanoid" id="Q3SX24"/>
<dbReference type="OMA" id="HIFFQHG"/>
<dbReference type="OrthoDB" id="1107553at2759"/>
<dbReference type="TreeFam" id="TF320527"/>
<dbReference type="Reactome" id="R-BTA-8951664">
    <property type="pathway name" value="Neddylation"/>
</dbReference>
<dbReference type="Reactome" id="R-BTA-983168">
    <property type="pathway name" value="Antigen processing: Ubiquitination &amp; Proteasome degradation"/>
</dbReference>
<dbReference type="UniPathway" id="UPA00143"/>
<dbReference type="Proteomes" id="UP000009136">
    <property type="component" value="Chromosome 16"/>
</dbReference>
<dbReference type="Bgee" id="ENSBTAG00000014777">
    <property type="expression patterns" value="Expressed in urethra and 105 other cell types or tissues"/>
</dbReference>
<dbReference type="GO" id="GO:0005737">
    <property type="term" value="C:cytoplasm"/>
    <property type="evidence" value="ECO:0000250"/>
    <property type="project" value="UniProtKB"/>
</dbReference>
<dbReference type="GO" id="GO:0044322">
    <property type="term" value="C:endoplasmic reticulum quality control compartment"/>
    <property type="evidence" value="ECO:0000318"/>
    <property type="project" value="GO_Central"/>
</dbReference>
<dbReference type="GO" id="GO:0019005">
    <property type="term" value="C:SCF ubiquitin ligase complex"/>
    <property type="evidence" value="ECO:0000250"/>
    <property type="project" value="UniProtKB"/>
</dbReference>
<dbReference type="GO" id="GO:0006281">
    <property type="term" value="P:DNA repair"/>
    <property type="evidence" value="ECO:0007669"/>
    <property type="project" value="UniProtKB-KW"/>
</dbReference>
<dbReference type="GO" id="GO:0036503">
    <property type="term" value="P:ERAD pathway"/>
    <property type="evidence" value="ECO:0000250"/>
    <property type="project" value="UniProtKB"/>
</dbReference>
<dbReference type="GO" id="GO:0006516">
    <property type="term" value="P:glycoprotein catabolic process"/>
    <property type="evidence" value="ECO:0000318"/>
    <property type="project" value="GO_Central"/>
</dbReference>
<dbReference type="GO" id="GO:0016567">
    <property type="term" value="P:protein ubiquitination"/>
    <property type="evidence" value="ECO:0007669"/>
    <property type="project" value="UniProtKB-UniPathway"/>
</dbReference>
<dbReference type="GO" id="GO:0006986">
    <property type="term" value="P:response to unfolded protein"/>
    <property type="evidence" value="ECO:0007669"/>
    <property type="project" value="UniProtKB-KW"/>
</dbReference>
<dbReference type="GO" id="GO:0031146">
    <property type="term" value="P:SCF-dependent proteasomal ubiquitin-dependent protein catabolic process"/>
    <property type="evidence" value="ECO:0000250"/>
    <property type="project" value="UniProtKB"/>
</dbReference>
<dbReference type="CDD" id="cd22168">
    <property type="entry name" value="F-box_FBXO6-like"/>
    <property type="match status" value="1"/>
</dbReference>
<dbReference type="FunFam" id="2.60.120.260:FF:000012">
    <property type="entry name" value="F-box only protein 2"/>
    <property type="match status" value="1"/>
</dbReference>
<dbReference type="FunFam" id="1.20.1280.50:FF:000002">
    <property type="entry name" value="F-box only protein 44"/>
    <property type="match status" value="1"/>
</dbReference>
<dbReference type="Gene3D" id="1.20.1280.50">
    <property type="match status" value="1"/>
</dbReference>
<dbReference type="Gene3D" id="2.60.120.260">
    <property type="entry name" value="Galactose-binding domain-like"/>
    <property type="match status" value="1"/>
</dbReference>
<dbReference type="InterPro" id="IPR007397">
    <property type="entry name" value="F-box-assoc_dom"/>
</dbReference>
<dbReference type="InterPro" id="IPR036047">
    <property type="entry name" value="F-box-like_dom_sf"/>
</dbReference>
<dbReference type="InterPro" id="IPR001810">
    <property type="entry name" value="F-box_dom"/>
</dbReference>
<dbReference type="InterPro" id="IPR039752">
    <property type="entry name" value="F-box_only"/>
</dbReference>
<dbReference type="InterPro" id="IPR008979">
    <property type="entry name" value="Galactose-bd-like_sf"/>
</dbReference>
<dbReference type="PANTHER" id="PTHR12125:SF12">
    <property type="entry name" value="F-BOX ONLY PROTEIN 6"/>
    <property type="match status" value="1"/>
</dbReference>
<dbReference type="PANTHER" id="PTHR12125">
    <property type="entry name" value="F-BOX ONLY PROTEIN 6-LIKE PROTEIN"/>
    <property type="match status" value="1"/>
</dbReference>
<dbReference type="Pfam" id="PF12937">
    <property type="entry name" value="F-box-like"/>
    <property type="match status" value="1"/>
</dbReference>
<dbReference type="Pfam" id="PF04300">
    <property type="entry name" value="FBA"/>
    <property type="match status" value="1"/>
</dbReference>
<dbReference type="SMART" id="SM01198">
    <property type="entry name" value="FBA"/>
    <property type="match status" value="1"/>
</dbReference>
<dbReference type="SMART" id="SM00256">
    <property type="entry name" value="FBOX"/>
    <property type="match status" value="1"/>
</dbReference>
<dbReference type="SUPFAM" id="SSF81383">
    <property type="entry name" value="F-box domain"/>
    <property type="match status" value="1"/>
</dbReference>
<dbReference type="SUPFAM" id="SSF49785">
    <property type="entry name" value="Galactose-binding domain-like"/>
    <property type="match status" value="1"/>
</dbReference>
<dbReference type="PROSITE" id="PS51114">
    <property type="entry name" value="FBA"/>
    <property type="match status" value="1"/>
</dbReference>
<dbReference type="PROSITE" id="PS50181">
    <property type="entry name" value="FBOX"/>
    <property type="match status" value="1"/>
</dbReference>
<reference key="1">
    <citation type="journal article" date="2005" name="BMC Genomics">
        <title>Characterization of 954 bovine full-CDS cDNA sequences.</title>
        <authorList>
            <person name="Harhay G.P."/>
            <person name="Sonstegard T.S."/>
            <person name="Keele J.W."/>
            <person name="Heaton M.P."/>
            <person name="Clawson M.L."/>
            <person name="Snelling W.M."/>
            <person name="Wiedmann R.T."/>
            <person name="Van Tassell C.P."/>
            <person name="Smith T.P.L."/>
        </authorList>
    </citation>
    <scope>NUCLEOTIDE SEQUENCE [LARGE SCALE MRNA]</scope>
</reference>
<reference key="2">
    <citation type="submission" date="2005-09" db="EMBL/GenBank/DDBJ databases">
        <authorList>
            <consortium name="NIH - Mammalian Gene Collection (MGC) project"/>
        </authorList>
    </citation>
    <scope>NUCLEOTIDE SEQUENCE [LARGE SCALE MRNA]</scope>
    <source>
        <strain>Hereford</strain>
        <tissue>Uterus</tissue>
    </source>
</reference>
<gene>
    <name type="primary">FBXO6</name>
    <name type="synonym">FBS2</name>
    <name type="synonym">FBX6</name>
</gene>
<sequence>MALVSINQLPENILLEVFMHVPARQLLRNCRPVCCLWRDLIDLVSLWKRKCLREGYVTEDWDQPVSDWKVFYFLCSLRRNLLRNPCAEEDMKSWKIDSNGGDQWKVESLPGAHGTGFPDSKVKKYFVTSYDMCLKSQIIDLKAEGYWEELLDKFRPDIVVKDWFAPRADCGCTYQIRVQLASADYLVLASFEPPPVTIHQWNDAKWTEVSHTFSDYPPGVRHIFFQHGGKDTQFWAGWYGPRVTNSSVVISHRVTRNPPHAMAQP</sequence>
<comment type="function">
    <text evidence="1">Substrate-recognition component of some SCF (SKP1-CUL1-F-box protein)-type E3 ubiquitin ligase complexes. Involved in endoplasmic reticulum-associated degradation pathway (ERAD) for misfolded lumenal proteins by recognizing and binding sugar chains on unfolded glycoproteins that are retrotranslocated into the cytosol and promoting their ubiquitination and subsequent degradation. Able to recognize and bind denatured glycoproteins, which are modified with not only high-mannose but also complex-type oligosaccharides. Also recognizes sulfated glycans. Also involved in DNA damage response by specifically recognizing activated CHEK1 (phosphorylated on 'Ser-345'), promoting its ubiquitination and degradation. Ubiquitination of CHEK1 is required to ensure that activated CHEK1 does not accumulate as cells progress through S phase, or when replication forks encounter transient impediments during normal DNA replication (By similarity).</text>
</comment>
<comment type="pathway">
    <text>Protein modification; protein ubiquitination.</text>
</comment>
<comment type="subunit">
    <text evidence="1">Part of a SCF (SKP1-cullin-F-box) protein ligase complex. Interacts with VCP, CHEK1 and CUL1 (By similarity).</text>
</comment>
<comment type="subcellular location">
    <subcellularLocation>
        <location evidence="1">Cytoplasm</location>
    </subcellularLocation>
</comment>
<keyword id="KW-0002">3D-structure</keyword>
<keyword id="KW-0963">Cytoplasm</keyword>
<keyword id="KW-0227">DNA damage</keyword>
<keyword id="KW-0234">DNA repair</keyword>
<keyword id="KW-0597">Phosphoprotein</keyword>
<keyword id="KW-1185">Reference proteome</keyword>
<keyword id="KW-0833">Ubl conjugation pathway</keyword>
<keyword id="KW-0834">Unfolded protein response</keyword>
<organism>
    <name type="scientific">Bos taurus</name>
    <name type="common">Bovine</name>
    <dbReference type="NCBI Taxonomy" id="9913"/>
    <lineage>
        <taxon>Eukaryota</taxon>
        <taxon>Metazoa</taxon>
        <taxon>Chordata</taxon>
        <taxon>Craniata</taxon>
        <taxon>Vertebrata</taxon>
        <taxon>Euteleostomi</taxon>
        <taxon>Mammalia</taxon>
        <taxon>Eutheria</taxon>
        <taxon>Laurasiatheria</taxon>
        <taxon>Artiodactyla</taxon>
        <taxon>Ruminantia</taxon>
        <taxon>Pecora</taxon>
        <taxon>Bovidae</taxon>
        <taxon>Bovinae</taxon>
        <taxon>Bos</taxon>
    </lineage>
</organism>
<feature type="chain" id="PRO_0000385626" description="F-box only protein 6">
    <location>
        <begin position="1"/>
        <end position="265"/>
    </location>
</feature>
<feature type="domain" description="F-box" evidence="3">
    <location>
        <begin position="3"/>
        <end position="50"/>
    </location>
</feature>
<feature type="domain" description="FBA" evidence="4">
    <location>
        <begin position="71"/>
        <end position="252"/>
    </location>
</feature>
<feature type="modified residue" description="Phosphoserine" evidence="2">
    <location>
        <position position="251"/>
    </location>
</feature>
<feature type="helix" evidence="5">
    <location>
        <begin position="11"/>
        <end position="19"/>
    </location>
</feature>
<feature type="helix" evidence="5">
    <location>
        <begin position="23"/>
        <end position="28"/>
    </location>
</feature>
<feature type="helix" evidence="5">
    <location>
        <begin position="31"/>
        <end position="33"/>
    </location>
</feature>
<feature type="helix" evidence="5">
    <location>
        <begin position="35"/>
        <end position="41"/>
    </location>
</feature>
<feature type="helix" evidence="5">
    <location>
        <begin position="44"/>
        <end position="54"/>
    </location>
</feature>
<feature type="strand" evidence="5">
    <location>
        <begin position="55"/>
        <end position="57"/>
    </location>
</feature>
<feature type="helix" evidence="5">
    <location>
        <begin position="68"/>
        <end position="77"/>
    </location>
</feature>
<feature type="turn" evidence="5">
    <location>
        <begin position="88"/>
        <end position="93"/>
    </location>
</feature>
<feature type="strand" evidence="5">
    <location>
        <begin position="95"/>
        <end position="98"/>
    </location>
</feature>
<feature type="strand" evidence="5">
    <location>
        <begin position="105"/>
        <end position="110"/>
    </location>
</feature>
<feature type="strand" evidence="5">
    <location>
        <begin position="124"/>
        <end position="127"/>
    </location>
</feature>
<feature type="strand" evidence="5">
    <location>
        <begin position="133"/>
        <end position="140"/>
    </location>
</feature>
<feature type="turn" evidence="5">
    <location>
        <begin position="141"/>
        <end position="145"/>
    </location>
</feature>
<feature type="helix" evidence="5">
    <location>
        <begin position="148"/>
        <end position="153"/>
    </location>
</feature>
<feature type="strand" evidence="5">
    <location>
        <begin position="156"/>
        <end position="165"/>
    </location>
</feature>
<feature type="strand" evidence="5">
    <location>
        <begin position="172"/>
        <end position="181"/>
    </location>
</feature>
<feature type="strand" evidence="5">
    <location>
        <begin position="187"/>
        <end position="191"/>
    </location>
</feature>
<feature type="strand" evidence="5">
    <location>
        <begin position="196"/>
        <end position="198"/>
    </location>
</feature>
<feature type="strand" evidence="5">
    <location>
        <begin position="207"/>
        <end position="213"/>
    </location>
</feature>
<feature type="strand" evidence="5">
    <location>
        <begin position="222"/>
        <end position="233"/>
    </location>
</feature>
<feature type="strand" evidence="5">
    <location>
        <begin position="236"/>
        <end position="238"/>
    </location>
</feature>
<feature type="strand" evidence="5">
    <location>
        <begin position="242"/>
        <end position="255"/>
    </location>
</feature>
<accession>Q3SX24</accession>
<proteinExistence type="evidence at protein level"/>
<name>FBX6_BOVIN</name>
<protein>
    <recommendedName>
        <fullName>F-box only protein 6</fullName>
    </recommendedName>
    <alternativeName>
        <fullName>F-box protein that recognizes sugar chains 2</fullName>
    </alternativeName>
</protein>